<protein>
    <recommendedName>
        <fullName>La-related protein 4B</fullName>
    </recommendedName>
    <alternativeName>
        <fullName>La ribonucleoprotein domain family member 4B</fullName>
    </alternativeName>
    <alternativeName>
        <fullName>La ribonucleoprotein domain family member 5</fullName>
    </alternativeName>
    <alternativeName>
        <fullName>La-related protein 5</fullName>
    </alternativeName>
</protein>
<comment type="function">
    <text evidence="1">Stimulates mRNA translation.</text>
</comment>
<comment type="subunit">
    <text evidence="1">Interacts with PABPC1. Interacts with RACK1. Associates with polysomes via the 40S ribosomal subunit.</text>
</comment>
<comment type="subcellular location">
    <subcellularLocation>
        <location evidence="1">Cytoplasm</location>
        <location evidence="1">Cytosol</location>
    </subcellularLocation>
    <text evidence="1">Localized in cytoplasmic mRNP granules containing untranslated mRNAs in response to arsenite treatment.</text>
</comment>
<comment type="alternative products">
    <event type="alternative splicing"/>
    <isoform>
        <id>Q6A0A2-1</id>
        <name>1</name>
        <sequence type="displayed"/>
    </isoform>
    <isoform>
        <id>Q6A0A2-2</id>
        <name>2</name>
        <sequence type="described" ref="VSP_023987"/>
    </isoform>
    <isoform>
        <id>Q6A0A2-3</id>
        <name>3</name>
        <sequence type="described" ref="VSP_023988"/>
    </isoform>
</comment>
<comment type="sequence caution" evidence="6">
    <conflict type="erroneous initiation">
        <sequence resource="EMBL-CDS" id="BAD32194"/>
    </conflict>
</comment>
<keyword id="KW-0007">Acetylation</keyword>
<keyword id="KW-0025">Alternative splicing</keyword>
<keyword id="KW-0963">Cytoplasm</keyword>
<keyword id="KW-0488">Methylation</keyword>
<keyword id="KW-0597">Phosphoprotein</keyword>
<keyword id="KW-1185">Reference proteome</keyword>
<keyword id="KW-0694">RNA-binding</keyword>
<keyword id="KW-0810">Translation regulation</keyword>
<name>LAR4B_MOUSE</name>
<reference key="1">
    <citation type="journal article" date="2004" name="DNA Res.">
        <title>Prediction of the coding sequences of mouse homologues of KIAA gene: IV. The complete nucleotide sequences of 500 mouse KIAA-homologous cDNAs identified by screening of terminal sequences of cDNA clones randomly sampled from size-fractionated libraries.</title>
        <authorList>
            <person name="Okazaki N."/>
            <person name="Kikuno R."/>
            <person name="Ohara R."/>
            <person name="Inamoto S."/>
            <person name="Koseki H."/>
            <person name="Hiraoka S."/>
            <person name="Saga Y."/>
            <person name="Seino S."/>
            <person name="Nishimura M."/>
            <person name="Kaisho T."/>
            <person name="Hoshino K."/>
            <person name="Kitamura H."/>
            <person name="Nagase T."/>
            <person name="Ohara O."/>
            <person name="Koga H."/>
        </authorList>
    </citation>
    <scope>NUCLEOTIDE SEQUENCE [LARGE SCALE MRNA] (ISOFORM 1)</scope>
    <source>
        <tissue>Fetal brain</tissue>
    </source>
</reference>
<reference key="2">
    <citation type="journal article" date="2005" name="Science">
        <title>The transcriptional landscape of the mammalian genome.</title>
        <authorList>
            <person name="Carninci P."/>
            <person name="Kasukawa T."/>
            <person name="Katayama S."/>
            <person name="Gough J."/>
            <person name="Frith M.C."/>
            <person name="Maeda N."/>
            <person name="Oyama R."/>
            <person name="Ravasi T."/>
            <person name="Lenhard B."/>
            <person name="Wells C."/>
            <person name="Kodzius R."/>
            <person name="Shimokawa K."/>
            <person name="Bajic V.B."/>
            <person name="Brenner S.E."/>
            <person name="Batalov S."/>
            <person name="Forrest A.R."/>
            <person name="Zavolan M."/>
            <person name="Davis M.J."/>
            <person name="Wilming L.G."/>
            <person name="Aidinis V."/>
            <person name="Allen J.E."/>
            <person name="Ambesi-Impiombato A."/>
            <person name="Apweiler R."/>
            <person name="Aturaliya R.N."/>
            <person name="Bailey T.L."/>
            <person name="Bansal M."/>
            <person name="Baxter L."/>
            <person name="Beisel K.W."/>
            <person name="Bersano T."/>
            <person name="Bono H."/>
            <person name="Chalk A.M."/>
            <person name="Chiu K.P."/>
            <person name="Choudhary V."/>
            <person name="Christoffels A."/>
            <person name="Clutterbuck D.R."/>
            <person name="Crowe M.L."/>
            <person name="Dalla E."/>
            <person name="Dalrymple B.P."/>
            <person name="de Bono B."/>
            <person name="Della Gatta G."/>
            <person name="di Bernardo D."/>
            <person name="Down T."/>
            <person name="Engstrom P."/>
            <person name="Fagiolini M."/>
            <person name="Faulkner G."/>
            <person name="Fletcher C.F."/>
            <person name="Fukushima T."/>
            <person name="Furuno M."/>
            <person name="Futaki S."/>
            <person name="Gariboldi M."/>
            <person name="Georgii-Hemming P."/>
            <person name="Gingeras T.R."/>
            <person name="Gojobori T."/>
            <person name="Green R.E."/>
            <person name="Gustincich S."/>
            <person name="Harbers M."/>
            <person name="Hayashi Y."/>
            <person name="Hensch T.K."/>
            <person name="Hirokawa N."/>
            <person name="Hill D."/>
            <person name="Huminiecki L."/>
            <person name="Iacono M."/>
            <person name="Ikeo K."/>
            <person name="Iwama A."/>
            <person name="Ishikawa T."/>
            <person name="Jakt M."/>
            <person name="Kanapin A."/>
            <person name="Katoh M."/>
            <person name="Kawasawa Y."/>
            <person name="Kelso J."/>
            <person name="Kitamura H."/>
            <person name="Kitano H."/>
            <person name="Kollias G."/>
            <person name="Krishnan S.P."/>
            <person name="Kruger A."/>
            <person name="Kummerfeld S.K."/>
            <person name="Kurochkin I.V."/>
            <person name="Lareau L.F."/>
            <person name="Lazarevic D."/>
            <person name="Lipovich L."/>
            <person name="Liu J."/>
            <person name="Liuni S."/>
            <person name="McWilliam S."/>
            <person name="Madan Babu M."/>
            <person name="Madera M."/>
            <person name="Marchionni L."/>
            <person name="Matsuda H."/>
            <person name="Matsuzawa S."/>
            <person name="Miki H."/>
            <person name="Mignone F."/>
            <person name="Miyake S."/>
            <person name="Morris K."/>
            <person name="Mottagui-Tabar S."/>
            <person name="Mulder N."/>
            <person name="Nakano N."/>
            <person name="Nakauchi H."/>
            <person name="Ng P."/>
            <person name="Nilsson R."/>
            <person name="Nishiguchi S."/>
            <person name="Nishikawa S."/>
            <person name="Nori F."/>
            <person name="Ohara O."/>
            <person name="Okazaki Y."/>
            <person name="Orlando V."/>
            <person name="Pang K.C."/>
            <person name="Pavan W.J."/>
            <person name="Pavesi G."/>
            <person name="Pesole G."/>
            <person name="Petrovsky N."/>
            <person name="Piazza S."/>
            <person name="Reed J."/>
            <person name="Reid J.F."/>
            <person name="Ring B.Z."/>
            <person name="Ringwald M."/>
            <person name="Rost B."/>
            <person name="Ruan Y."/>
            <person name="Salzberg S.L."/>
            <person name="Sandelin A."/>
            <person name="Schneider C."/>
            <person name="Schoenbach C."/>
            <person name="Sekiguchi K."/>
            <person name="Semple C.A."/>
            <person name="Seno S."/>
            <person name="Sessa L."/>
            <person name="Sheng Y."/>
            <person name="Shibata Y."/>
            <person name="Shimada H."/>
            <person name="Shimada K."/>
            <person name="Silva D."/>
            <person name="Sinclair B."/>
            <person name="Sperling S."/>
            <person name="Stupka E."/>
            <person name="Sugiura K."/>
            <person name="Sultana R."/>
            <person name="Takenaka Y."/>
            <person name="Taki K."/>
            <person name="Tammoja K."/>
            <person name="Tan S.L."/>
            <person name="Tang S."/>
            <person name="Taylor M.S."/>
            <person name="Tegner J."/>
            <person name="Teichmann S.A."/>
            <person name="Ueda H.R."/>
            <person name="van Nimwegen E."/>
            <person name="Verardo R."/>
            <person name="Wei C.L."/>
            <person name="Yagi K."/>
            <person name="Yamanishi H."/>
            <person name="Zabarovsky E."/>
            <person name="Zhu S."/>
            <person name="Zimmer A."/>
            <person name="Hide W."/>
            <person name="Bult C."/>
            <person name="Grimmond S.M."/>
            <person name="Teasdale R.D."/>
            <person name="Liu E.T."/>
            <person name="Brusic V."/>
            <person name="Quackenbush J."/>
            <person name="Wahlestedt C."/>
            <person name="Mattick J.S."/>
            <person name="Hume D.A."/>
            <person name="Kai C."/>
            <person name="Sasaki D."/>
            <person name="Tomaru Y."/>
            <person name="Fukuda S."/>
            <person name="Kanamori-Katayama M."/>
            <person name="Suzuki M."/>
            <person name="Aoki J."/>
            <person name="Arakawa T."/>
            <person name="Iida J."/>
            <person name="Imamura K."/>
            <person name="Itoh M."/>
            <person name="Kato T."/>
            <person name="Kawaji H."/>
            <person name="Kawagashira N."/>
            <person name="Kawashima T."/>
            <person name="Kojima M."/>
            <person name="Kondo S."/>
            <person name="Konno H."/>
            <person name="Nakano K."/>
            <person name="Ninomiya N."/>
            <person name="Nishio T."/>
            <person name="Okada M."/>
            <person name="Plessy C."/>
            <person name="Shibata K."/>
            <person name="Shiraki T."/>
            <person name="Suzuki S."/>
            <person name="Tagami M."/>
            <person name="Waki K."/>
            <person name="Watahiki A."/>
            <person name="Okamura-Oho Y."/>
            <person name="Suzuki H."/>
            <person name="Kawai J."/>
            <person name="Hayashizaki Y."/>
        </authorList>
    </citation>
    <scope>NUCLEOTIDE SEQUENCE [LARGE SCALE MRNA] (ISOFORM 1)</scope>
    <scope>NUCLEOTIDE SEQUENCE [LARGE SCALE MRNA] OF 1-672 (ISOFORM 3)</scope>
    <source>
        <strain>C57BL/6J</strain>
        <tissue>Adipose tissue</tissue>
        <tissue>Head</tissue>
        <tissue>Thymus</tissue>
    </source>
</reference>
<reference key="3">
    <citation type="journal article" date="2004" name="Genome Res.">
        <title>The status, quality, and expansion of the NIH full-length cDNA project: the Mammalian Gene Collection (MGC).</title>
        <authorList>
            <consortium name="The MGC Project Team"/>
        </authorList>
    </citation>
    <scope>NUCLEOTIDE SEQUENCE [LARGE SCALE MRNA] (ISOFORM 2)</scope>
    <source>
        <tissue>Limb</tissue>
    </source>
</reference>
<reference key="4">
    <citation type="journal article" date="2009" name="Immunity">
        <title>The phagosomal proteome in interferon-gamma-activated macrophages.</title>
        <authorList>
            <person name="Trost M."/>
            <person name="English L."/>
            <person name="Lemieux S."/>
            <person name="Courcelles M."/>
            <person name="Desjardins M."/>
            <person name="Thibault P."/>
        </authorList>
    </citation>
    <scope>PHOSPHORYLATION [LARGE SCALE ANALYSIS] AT SER-246 AND SER-500</scope>
    <scope>IDENTIFICATION BY MASS SPECTROMETRY [LARGE SCALE ANALYSIS]</scope>
</reference>
<reference key="5">
    <citation type="journal article" date="2009" name="Mol. Cell. Proteomics">
        <title>Large scale localization of protein phosphorylation by use of electron capture dissociation mass spectrometry.</title>
        <authorList>
            <person name="Sweet S.M."/>
            <person name="Bailey C.M."/>
            <person name="Cunningham D.L."/>
            <person name="Heath J.K."/>
            <person name="Cooper H.J."/>
        </authorList>
    </citation>
    <scope>IDENTIFICATION BY MASS SPECTROMETRY [LARGE SCALE ANALYSIS]</scope>
    <source>
        <tissue>Embryonic fibroblast</tissue>
    </source>
</reference>
<reference key="6">
    <citation type="journal article" date="2010" name="Cell">
        <title>A tissue-specific atlas of mouse protein phosphorylation and expression.</title>
        <authorList>
            <person name="Huttlin E.L."/>
            <person name="Jedrychowski M.P."/>
            <person name="Elias J.E."/>
            <person name="Goswami T."/>
            <person name="Rad R."/>
            <person name="Beausoleil S.A."/>
            <person name="Villen J."/>
            <person name="Haas W."/>
            <person name="Sowa M.E."/>
            <person name="Gygi S.P."/>
        </authorList>
    </citation>
    <scope>PHOSPHORYLATION [LARGE SCALE ANALYSIS] AT THR-735 AND SER-739</scope>
    <scope>IDENTIFICATION BY MASS SPECTROMETRY [LARGE SCALE ANALYSIS]</scope>
    <source>
        <tissue>Brain</tissue>
        <tissue>Brown adipose tissue</tissue>
        <tissue>Heart</tissue>
        <tissue>Liver</tissue>
        <tissue>Lung</tissue>
        <tissue>Pancreas</tissue>
        <tissue>Spleen</tissue>
        <tissue>Testis</tissue>
    </source>
</reference>
<reference key="7">
    <citation type="journal article" date="2014" name="Mol. Cell. Proteomics">
        <title>Immunoaffinity enrichment and mass spectrometry analysis of protein methylation.</title>
        <authorList>
            <person name="Guo A."/>
            <person name="Gu H."/>
            <person name="Zhou J."/>
            <person name="Mulhern D."/>
            <person name="Wang Y."/>
            <person name="Lee K.A."/>
            <person name="Yang V."/>
            <person name="Aguiar M."/>
            <person name="Kornhauser J."/>
            <person name="Jia X."/>
            <person name="Ren J."/>
            <person name="Beausoleil S.A."/>
            <person name="Silva J.C."/>
            <person name="Vemulapalli V."/>
            <person name="Bedford M.T."/>
            <person name="Comb M.J."/>
        </authorList>
    </citation>
    <scope>METHYLATION [LARGE SCALE ANALYSIS] AT ARG-495</scope>
    <scope>IDENTIFICATION BY MASS SPECTROMETRY [LARGE SCALE ANALYSIS]</scope>
    <source>
        <tissue>Embryo</tissue>
    </source>
</reference>
<sequence>MTSDQDAKVVAEPQAQRVQEGKDSSHLMNGPISQTTSQTRSLPALTQVPTTKVSELNPNAKVWGTHMLHLEASSAAVGVNAAWEEAPGHPTDCDQQVLGLDANGDGDKSRENAALPDAQEAEQTDMSTLALDHSEYEPLPENNDTGGNESQPESQEDPREVLKKTLEFCLSRENLASDMYLISQMDSDQYVPITTVANLDHIKKLSTDVDLIVEVLRSLPLVQVDEKGEKVRPNQNRCIVILREISESTPVEEVEALFKGDNLPKFINCEFAYNDNWFITFETEADAQQAYKYLREEVRTFQGKPIKARIKAKAIAINTFLPKNGFRPLDMNLYTQQRYATSFYLPPVYSPQQQFPLYSLITPQTWSTTHSYLDPPLVTPFPSTGFINGFTSPTFKPATSPLTSLRQYPPRSRNPSKSHLRHAIPSTERGPGLLESPSIFNFTADRLINGVRSPQTRQAGQTRTRIQNPSAYAKREIGTGRVEPSSLESSPGLGRGRKNSFGYRKKREEKFTSSQTQSPTPPKPPSPSFELGLSNFPPLPGAAGNLKTEDLFENRLSSLIIGSSKERNLSTDASTNTVPVVGPREPSVPAPCAVSAAFERSPSPVHLPEDPKVAEKQRETQSVDRLPSTPTTTACKSVQVNGAATELRKPSYAEICQRTSKDPSSSSPLQPPKEQKPSTVACGKEEKQLSEPVERHREPPALKSTPGVPKDQRRQPGRRASPPAAGKRLSKEQNTPPKSPQ</sequence>
<gene>
    <name type="primary">Larp4b</name>
    <name type="synonym">D13Wsu64e</name>
    <name type="synonym">Kiaa0217</name>
    <name type="synonym">Larp5</name>
</gene>
<proteinExistence type="evidence at protein level"/>
<dbReference type="EMBL" id="AK172916">
    <property type="protein sequence ID" value="BAD32194.1"/>
    <property type="status" value="ALT_INIT"/>
    <property type="molecule type" value="mRNA"/>
</dbReference>
<dbReference type="EMBL" id="AK042491">
    <property type="protein sequence ID" value="BAC31273.2"/>
    <property type="molecule type" value="mRNA"/>
</dbReference>
<dbReference type="EMBL" id="AK080953">
    <property type="protein sequence ID" value="BAC38091.1"/>
    <property type="molecule type" value="mRNA"/>
</dbReference>
<dbReference type="EMBL" id="AK160759">
    <property type="protein sequence ID" value="BAE35994.1"/>
    <property type="molecule type" value="mRNA"/>
</dbReference>
<dbReference type="EMBL" id="BC078640">
    <property type="protein sequence ID" value="AAH78640.1"/>
    <property type="molecule type" value="mRNA"/>
</dbReference>
<dbReference type="CCDS" id="CCDS36588.1">
    <molecule id="Q6A0A2-1"/>
</dbReference>
<dbReference type="CCDS" id="CCDS79162.1">
    <molecule id="Q6A0A2-2"/>
</dbReference>
<dbReference type="RefSeq" id="NP_001298046.1">
    <molecule id="Q6A0A2-2"/>
    <property type="nucleotide sequence ID" value="NM_001311117.1"/>
</dbReference>
<dbReference type="RefSeq" id="NP_766173.1">
    <molecule id="Q6A0A2-1"/>
    <property type="nucleotide sequence ID" value="NM_172585.3"/>
</dbReference>
<dbReference type="RefSeq" id="XP_006516539.1">
    <molecule id="Q6A0A2-1"/>
    <property type="nucleotide sequence ID" value="XM_006516476.4"/>
</dbReference>
<dbReference type="RefSeq" id="XP_006516540.1">
    <property type="nucleotide sequence ID" value="XM_006516477.3"/>
</dbReference>
<dbReference type="RefSeq" id="XP_036013869.1">
    <molecule id="Q6A0A2-1"/>
    <property type="nucleotide sequence ID" value="XM_036157976.1"/>
</dbReference>
<dbReference type="SMR" id="Q6A0A2"/>
<dbReference type="BioGRID" id="229985">
    <property type="interactions" value="9"/>
</dbReference>
<dbReference type="FunCoup" id="Q6A0A2">
    <property type="interactions" value="1129"/>
</dbReference>
<dbReference type="IntAct" id="Q6A0A2">
    <property type="interactions" value="2"/>
</dbReference>
<dbReference type="MINT" id="Q6A0A2"/>
<dbReference type="STRING" id="10090.ENSMUSP00000140993"/>
<dbReference type="GlyGen" id="Q6A0A2">
    <property type="glycosylation" value="7 sites, 1 N-linked glycan (1 site), 1 O-linked glycan (5 sites)"/>
</dbReference>
<dbReference type="iPTMnet" id="Q6A0A2"/>
<dbReference type="PhosphoSitePlus" id="Q6A0A2"/>
<dbReference type="SwissPalm" id="Q6A0A2"/>
<dbReference type="jPOST" id="Q6A0A2"/>
<dbReference type="PaxDb" id="10090-ENSMUSP00000140993"/>
<dbReference type="PeptideAtlas" id="Q6A0A2"/>
<dbReference type="ProteomicsDB" id="265038">
    <molecule id="Q6A0A2-1"/>
</dbReference>
<dbReference type="ProteomicsDB" id="265039">
    <molecule id="Q6A0A2-2"/>
</dbReference>
<dbReference type="ProteomicsDB" id="265040">
    <molecule id="Q6A0A2-3"/>
</dbReference>
<dbReference type="Pumba" id="Q6A0A2"/>
<dbReference type="Antibodypedia" id="52530">
    <property type="antibodies" value="47 antibodies from 16 providers"/>
</dbReference>
<dbReference type="DNASU" id="217980"/>
<dbReference type="Ensembl" id="ENSMUST00000091829.4">
    <molecule id="Q6A0A2-2"/>
    <property type="protein sequence ID" value="ENSMUSP00000089437.4"/>
    <property type="gene ID" value="ENSMUSG00000033499.15"/>
</dbReference>
<dbReference type="Ensembl" id="ENSMUST00000188211.8">
    <molecule id="Q6A0A2-1"/>
    <property type="protein sequence ID" value="ENSMUSP00000140993.2"/>
    <property type="gene ID" value="ENSMUSG00000033499.15"/>
</dbReference>
<dbReference type="Ensembl" id="ENSMUST00000188939.7">
    <molecule id="Q6A0A2-3"/>
    <property type="protein sequence ID" value="ENSMUSP00000139578.2"/>
    <property type="gene ID" value="ENSMUSG00000033499.15"/>
</dbReference>
<dbReference type="GeneID" id="217980"/>
<dbReference type="KEGG" id="mmu:217980"/>
<dbReference type="UCSC" id="uc007pkr.1">
    <molecule id="Q6A0A2-1"/>
    <property type="organism name" value="mouse"/>
</dbReference>
<dbReference type="UCSC" id="uc007pks.1">
    <molecule id="Q6A0A2-2"/>
    <property type="organism name" value="mouse"/>
</dbReference>
<dbReference type="UCSC" id="uc011ywb.1">
    <molecule id="Q6A0A2-3"/>
    <property type="organism name" value="mouse"/>
</dbReference>
<dbReference type="AGR" id="MGI:106330"/>
<dbReference type="CTD" id="23185"/>
<dbReference type="MGI" id="MGI:106330">
    <property type="gene designation" value="Larp4b"/>
</dbReference>
<dbReference type="VEuPathDB" id="HostDB:ENSMUSG00000033499"/>
<dbReference type="eggNOG" id="KOG2591">
    <property type="taxonomic scope" value="Eukaryota"/>
</dbReference>
<dbReference type="GeneTree" id="ENSGT00940000157755"/>
<dbReference type="HOGENOM" id="CLU_025110_0_0_1"/>
<dbReference type="InParanoid" id="Q6A0A2"/>
<dbReference type="OMA" id="RMQNTTT"/>
<dbReference type="OrthoDB" id="10046764at2759"/>
<dbReference type="PhylomeDB" id="Q6A0A2"/>
<dbReference type="TreeFam" id="TF321960"/>
<dbReference type="BioGRID-ORCS" id="217980">
    <property type="hits" value="2 hits in 76 CRISPR screens"/>
</dbReference>
<dbReference type="ChiTaRS" id="Larp4b">
    <property type="organism name" value="mouse"/>
</dbReference>
<dbReference type="PRO" id="PR:Q6A0A2"/>
<dbReference type="Proteomes" id="UP000000589">
    <property type="component" value="Chromosome 13"/>
</dbReference>
<dbReference type="RNAct" id="Q6A0A2">
    <property type="molecule type" value="protein"/>
</dbReference>
<dbReference type="Bgee" id="ENSMUSG00000033499">
    <property type="expression patterns" value="Expressed in crypt of Lieberkuhn of small intestine and 261 other cell types or tissues"/>
</dbReference>
<dbReference type="ExpressionAtlas" id="Q6A0A2">
    <property type="expression patterns" value="baseline and differential"/>
</dbReference>
<dbReference type="GO" id="GO:0010494">
    <property type="term" value="C:cytoplasmic stress granule"/>
    <property type="evidence" value="ECO:0000250"/>
    <property type="project" value="UniProtKB"/>
</dbReference>
<dbReference type="GO" id="GO:0005829">
    <property type="term" value="C:cytosol"/>
    <property type="evidence" value="ECO:0000250"/>
    <property type="project" value="UniProtKB"/>
</dbReference>
<dbReference type="GO" id="GO:0003723">
    <property type="term" value="F:RNA binding"/>
    <property type="evidence" value="ECO:0007669"/>
    <property type="project" value="UniProtKB-KW"/>
</dbReference>
<dbReference type="GO" id="GO:0045727">
    <property type="term" value="P:positive regulation of translation"/>
    <property type="evidence" value="ECO:0000250"/>
    <property type="project" value="UniProtKB"/>
</dbReference>
<dbReference type="CDD" id="cd08036">
    <property type="entry name" value="LARP_5"/>
    <property type="match status" value="1"/>
</dbReference>
<dbReference type="CDD" id="cd12706">
    <property type="entry name" value="RRM_LARP5"/>
    <property type="match status" value="1"/>
</dbReference>
<dbReference type="FunFam" id="1.10.10.10:FF:000144">
    <property type="entry name" value="la-related protein 4 isoform X2"/>
    <property type="match status" value="1"/>
</dbReference>
<dbReference type="Gene3D" id="1.10.10.10">
    <property type="entry name" value="Winged helix-like DNA-binding domain superfamily/Winged helix DNA-binding domain"/>
    <property type="match status" value="1"/>
</dbReference>
<dbReference type="InterPro" id="IPR045180">
    <property type="entry name" value="La_dom_prot"/>
</dbReference>
<dbReference type="InterPro" id="IPR006630">
    <property type="entry name" value="La_HTH"/>
</dbReference>
<dbReference type="InterPro" id="IPR034900">
    <property type="entry name" value="LARP5_RRM"/>
</dbReference>
<dbReference type="InterPro" id="IPR035979">
    <property type="entry name" value="RBD_domain_sf"/>
</dbReference>
<dbReference type="InterPro" id="IPR036388">
    <property type="entry name" value="WH-like_DNA-bd_sf"/>
</dbReference>
<dbReference type="InterPro" id="IPR036390">
    <property type="entry name" value="WH_DNA-bd_sf"/>
</dbReference>
<dbReference type="PANTHER" id="PTHR22792:SF43">
    <property type="entry name" value="LA-RELATED PROTEIN 4B"/>
    <property type="match status" value="1"/>
</dbReference>
<dbReference type="PANTHER" id="PTHR22792">
    <property type="entry name" value="LUPUS LA PROTEIN-RELATED"/>
    <property type="match status" value="1"/>
</dbReference>
<dbReference type="Pfam" id="PF05383">
    <property type="entry name" value="La"/>
    <property type="match status" value="1"/>
</dbReference>
<dbReference type="SMART" id="SM00715">
    <property type="entry name" value="LA"/>
    <property type="match status" value="1"/>
</dbReference>
<dbReference type="SUPFAM" id="SSF54928">
    <property type="entry name" value="RNA-binding domain, RBD"/>
    <property type="match status" value="1"/>
</dbReference>
<dbReference type="SUPFAM" id="SSF46785">
    <property type="entry name" value="Winged helix' DNA-binding domain"/>
    <property type="match status" value="1"/>
</dbReference>
<dbReference type="PROSITE" id="PS50961">
    <property type="entry name" value="HTH_LA"/>
    <property type="match status" value="1"/>
</dbReference>
<accession>Q6A0A2</accession>
<accession>Q3TUH7</accession>
<accession>Q6AZA8</accession>
<accession>Q8BJP3</accession>
<accession>Q8BY17</accession>
<organism>
    <name type="scientific">Mus musculus</name>
    <name type="common">Mouse</name>
    <dbReference type="NCBI Taxonomy" id="10090"/>
    <lineage>
        <taxon>Eukaryota</taxon>
        <taxon>Metazoa</taxon>
        <taxon>Chordata</taxon>
        <taxon>Craniata</taxon>
        <taxon>Vertebrata</taxon>
        <taxon>Euteleostomi</taxon>
        <taxon>Mammalia</taxon>
        <taxon>Eutheria</taxon>
        <taxon>Euarchontoglires</taxon>
        <taxon>Glires</taxon>
        <taxon>Rodentia</taxon>
        <taxon>Myomorpha</taxon>
        <taxon>Muroidea</taxon>
        <taxon>Muridae</taxon>
        <taxon>Murinae</taxon>
        <taxon>Mus</taxon>
        <taxon>Mus</taxon>
    </lineage>
</organism>
<feature type="chain" id="PRO_0000281140" description="La-related protein 4B">
    <location>
        <begin position="1"/>
        <end position="741"/>
    </location>
</feature>
<feature type="domain" description="HTH La-type RNA-binding" evidence="2">
    <location>
        <begin position="152"/>
        <end position="241"/>
    </location>
</feature>
<feature type="domain" description="RRM">
    <location>
        <begin position="242"/>
        <end position="309"/>
    </location>
</feature>
<feature type="region of interest" description="Disordered" evidence="3">
    <location>
        <begin position="1"/>
        <end position="45"/>
    </location>
</feature>
<feature type="region of interest" description="Disordered" evidence="3">
    <location>
        <begin position="86"/>
        <end position="160"/>
    </location>
</feature>
<feature type="region of interest" description="Disordered" evidence="3">
    <location>
        <begin position="398"/>
        <end position="436"/>
    </location>
</feature>
<feature type="region of interest" description="Disordered" evidence="3">
    <location>
        <begin position="451"/>
        <end position="542"/>
    </location>
</feature>
<feature type="region of interest" description="Disordered" evidence="3">
    <location>
        <begin position="567"/>
        <end position="586"/>
    </location>
</feature>
<feature type="region of interest" description="Disordered" evidence="3">
    <location>
        <begin position="599"/>
        <end position="741"/>
    </location>
</feature>
<feature type="compositionally biased region" description="Polar residues" evidence="3">
    <location>
        <begin position="31"/>
        <end position="41"/>
    </location>
</feature>
<feature type="compositionally biased region" description="Polar residues" evidence="3">
    <location>
        <begin position="142"/>
        <end position="153"/>
    </location>
</feature>
<feature type="compositionally biased region" description="Polar residues" evidence="3">
    <location>
        <begin position="452"/>
        <end position="470"/>
    </location>
</feature>
<feature type="compositionally biased region" description="Basic residues" evidence="3">
    <location>
        <begin position="495"/>
        <end position="505"/>
    </location>
</feature>
<feature type="compositionally biased region" description="Basic and acidic residues" evidence="3">
    <location>
        <begin position="607"/>
        <end position="622"/>
    </location>
</feature>
<feature type="compositionally biased region" description="Polar residues" evidence="3">
    <location>
        <begin position="628"/>
        <end position="642"/>
    </location>
</feature>
<feature type="compositionally biased region" description="Basic and acidic residues" evidence="3">
    <location>
        <begin position="683"/>
        <end position="700"/>
    </location>
</feature>
<feature type="compositionally biased region" description="Polar residues" evidence="3">
    <location>
        <begin position="732"/>
        <end position="741"/>
    </location>
</feature>
<feature type="modified residue" description="N-acetylmethionine" evidence="1">
    <location>
        <position position="1"/>
    </location>
</feature>
<feature type="modified residue" description="Phosphoserine" evidence="7">
    <location>
        <position position="246"/>
    </location>
</feature>
<feature type="modified residue" description="Omega-N-methylarginine" evidence="1">
    <location>
        <position position="406"/>
    </location>
</feature>
<feature type="modified residue" description="Omega-N-methylarginine" evidence="1">
    <location>
        <position position="421"/>
    </location>
</feature>
<feature type="modified residue" description="Phosphoserine" evidence="1">
    <location>
        <position position="426"/>
    </location>
</feature>
<feature type="modified residue" description="Phosphoserine" evidence="1">
    <location>
        <position position="436"/>
    </location>
</feature>
<feature type="modified residue" description="Phosphoserine" evidence="1">
    <location>
        <position position="453"/>
    </location>
</feature>
<feature type="modified residue" description="Phosphoserine" evidence="1">
    <location>
        <position position="490"/>
    </location>
</feature>
<feature type="modified residue" description="Omega-N-methylarginine" evidence="9">
    <location>
        <position position="495"/>
    </location>
</feature>
<feature type="modified residue" description="Phosphoserine" evidence="7">
    <location>
        <position position="500"/>
    </location>
</feature>
<feature type="modified residue" description="Phosphothreonine" evidence="1">
    <location>
        <position position="520"/>
    </location>
</feature>
<feature type="modified residue" description="Phosphoserine" evidence="1">
    <location>
        <position position="526"/>
    </location>
</feature>
<feature type="modified residue" description="Phosphoserine" evidence="1">
    <location>
        <position position="558"/>
    </location>
</feature>
<feature type="modified residue" description="Phosphoserine" evidence="1">
    <location>
        <position position="570"/>
    </location>
</feature>
<feature type="modified residue" description="Phosphoserine" evidence="1">
    <location>
        <position position="603"/>
    </location>
</feature>
<feature type="modified residue" description="Phosphoserine" evidence="1">
    <location>
        <position position="667"/>
    </location>
</feature>
<feature type="modified residue" description="Phosphoserine" evidence="1">
    <location>
        <position position="721"/>
    </location>
</feature>
<feature type="modified residue" description="N6-acetyllysine" evidence="1">
    <location>
        <position position="727"/>
    </location>
</feature>
<feature type="modified residue" description="Phosphoserine" evidence="1">
    <location>
        <position position="730"/>
    </location>
</feature>
<feature type="modified residue" description="Phosphothreonine" evidence="8">
    <location>
        <position position="735"/>
    </location>
</feature>
<feature type="modified residue" description="Phosphoserine" evidence="8">
    <location>
        <position position="739"/>
    </location>
</feature>
<feature type="splice variant" id="VSP_023987" description="In isoform 2." evidence="4">
    <location>
        <begin position="414"/>
        <end position="497"/>
    </location>
</feature>
<feature type="splice variant" id="VSP_023988" description="In isoform 3." evidence="5">
    <location>
        <begin position="568"/>
        <end position="645"/>
    </location>
</feature>
<feature type="sequence conflict" description="In Ref. 1; BAD32194." evidence="6" ref="1">
    <original>A</original>
    <variation>D</variation>
    <location>
        <position position="102"/>
    </location>
</feature>
<feature type="sequence conflict" description="In Ref. 1; BAD32194." evidence="6" ref="1">
    <original>L</original>
    <variation>S</variation>
    <location>
        <position position="345"/>
    </location>
</feature>
<feature type="sequence conflict" description="In Ref. 1; BAD32194." evidence="6" ref="1">
    <original>Q</original>
    <variation>R</variation>
    <location>
        <position position="688"/>
    </location>
</feature>
<evidence type="ECO:0000250" key="1">
    <source>
        <dbReference type="UniProtKB" id="Q92615"/>
    </source>
</evidence>
<evidence type="ECO:0000255" key="2">
    <source>
        <dbReference type="PROSITE-ProRule" id="PRU00332"/>
    </source>
</evidence>
<evidence type="ECO:0000256" key="3">
    <source>
        <dbReference type="SAM" id="MobiDB-lite"/>
    </source>
</evidence>
<evidence type="ECO:0000303" key="4">
    <source>
    </source>
</evidence>
<evidence type="ECO:0000303" key="5">
    <source>
    </source>
</evidence>
<evidence type="ECO:0000305" key="6"/>
<evidence type="ECO:0007744" key="7">
    <source>
    </source>
</evidence>
<evidence type="ECO:0007744" key="8">
    <source>
    </source>
</evidence>
<evidence type="ECO:0007744" key="9">
    <source>
    </source>
</evidence>